<dbReference type="EC" id="2.7.2.11" evidence="1"/>
<dbReference type="EMBL" id="CP001186">
    <property type="protein sequence ID" value="ACK98201.1"/>
    <property type="molecule type" value="Genomic_DNA"/>
</dbReference>
<dbReference type="RefSeq" id="WP_000744738.1">
    <property type="nucleotide sequence ID" value="NC_011772.1"/>
</dbReference>
<dbReference type="SMR" id="B7ILK2"/>
<dbReference type="KEGG" id="bcg:BCG9842_B2251"/>
<dbReference type="HOGENOM" id="CLU_025400_2_0_9"/>
<dbReference type="UniPathway" id="UPA00098">
    <property type="reaction ID" value="UER00359"/>
</dbReference>
<dbReference type="Proteomes" id="UP000006744">
    <property type="component" value="Chromosome"/>
</dbReference>
<dbReference type="GO" id="GO:0005829">
    <property type="term" value="C:cytosol"/>
    <property type="evidence" value="ECO:0007669"/>
    <property type="project" value="TreeGrafter"/>
</dbReference>
<dbReference type="GO" id="GO:0005524">
    <property type="term" value="F:ATP binding"/>
    <property type="evidence" value="ECO:0007669"/>
    <property type="project" value="UniProtKB-KW"/>
</dbReference>
<dbReference type="GO" id="GO:0004349">
    <property type="term" value="F:glutamate 5-kinase activity"/>
    <property type="evidence" value="ECO:0007669"/>
    <property type="project" value="UniProtKB-UniRule"/>
</dbReference>
<dbReference type="GO" id="GO:0003723">
    <property type="term" value="F:RNA binding"/>
    <property type="evidence" value="ECO:0007669"/>
    <property type="project" value="InterPro"/>
</dbReference>
<dbReference type="GO" id="GO:0055129">
    <property type="term" value="P:L-proline biosynthetic process"/>
    <property type="evidence" value="ECO:0007669"/>
    <property type="project" value="UniProtKB-UniRule"/>
</dbReference>
<dbReference type="CDD" id="cd04242">
    <property type="entry name" value="AAK_G5K_ProB"/>
    <property type="match status" value="1"/>
</dbReference>
<dbReference type="CDD" id="cd21157">
    <property type="entry name" value="PUA_G5K"/>
    <property type="match status" value="1"/>
</dbReference>
<dbReference type="FunFam" id="2.30.130.10:FF:000007">
    <property type="entry name" value="Glutamate 5-kinase"/>
    <property type="match status" value="1"/>
</dbReference>
<dbReference type="FunFam" id="3.40.1160.10:FF:000018">
    <property type="entry name" value="Glutamate 5-kinase"/>
    <property type="match status" value="1"/>
</dbReference>
<dbReference type="Gene3D" id="3.40.1160.10">
    <property type="entry name" value="Acetylglutamate kinase-like"/>
    <property type="match status" value="1"/>
</dbReference>
<dbReference type="Gene3D" id="2.30.130.10">
    <property type="entry name" value="PUA domain"/>
    <property type="match status" value="1"/>
</dbReference>
<dbReference type="HAMAP" id="MF_00456">
    <property type="entry name" value="ProB"/>
    <property type="match status" value="1"/>
</dbReference>
<dbReference type="InterPro" id="IPR036393">
    <property type="entry name" value="AceGlu_kinase-like_sf"/>
</dbReference>
<dbReference type="InterPro" id="IPR001048">
    <property type="entry name" value="Asp/Glu/Uridylate_kinase"/>
</dbReference>
<dbReference type="InterPro" id="IPR041739">
    <property type="entry name" value="G5K_ProB"/>
</dbReference>
<dbReference type="InterPro" id="IPR001057">
    <property type="entry name" value="Glu/AcGlu_kinase"/>
</dbReference>
<dbReference type="InterPro" id="IPR011529">
    <property type="entry name" value="Glu_5kinase"/>
</dbReference>
<dbReference type="InterPro" id="IPR005715">
    <property type="entry name" value="Glu_5kinase/COase_Synthase"/>
</dbReference>
<dbReference type="InterPro" id="IPR019797">
    <property type="entry name" value="Glutamate_5-kinase_CS"/>
</dbReference>
<dbReference type="InterPro" id="IPR002478">
    <property type="entry name" value="PUA"/>
</dbReference>
<dbReference type="InterPro" id="IPR015947">
    <property type="entry name" value="PUA-like_sf"/>
</dbReference>
<dbReference type="InterPro" id="IPR036974">
    <property type="entry name" value="PUA_sf"/>
</dbReference>
<dbReference type="NCBIfam" id="TIGR01027">
    <property type="entry name" value="proB"/>
    <property type="match status" value="1"/>
</dbReference>
<dbReference type="PANTHER" id="PTHR43654">
    <property type="entry name" value="GLUTAMATE 5-KINASE"/>
    <property type="match status" value="1"/>
</dbReference>
<dbReference type="PANTHER" id="PTHR43654:SF1">
    <property type="entry name" value="ISOPENTENYL PHOSPHATE KINASE"/>
    <property type="match status" value="1"/>
</dbReference>
<dbReference type="Pfam" id="PF00696">
    <property type="entry name" value="AA_kinase"/>
    <property type="match status" value="1"/>
</dbReference>
<dbReference type="Pfam" id="PF01472">
    <property type="entry name" value="PUA"/>
    <property type="match status" value="1"/>
</dbReference>
<dbReference type="PIRSF" id="PIRSF000729">
    <property type="entry name" value="GK"/>
    <property type="match status" value="1"/>
</dbReference>
<dbReference type="PRINTS" id="PR00474">
    <property type="entry name" value="GLU5KINASE"/>
</dbReference>
<dbReference type="SMART" id="SM00359">
    <property type="entry name" value="PUA"/>
    <property type="match status" value="1"/>
</dbReference>
<dbReference type="SUPFAM" id="SSF53633">
    <property type="entry name" value="Carbamate kinase-like"/>
    <property type="match status" value="1"/>
</dbReference>
<dbReference type="SUPFAM" id="SSF88697">
    <property type="entry name" value="PUA domain-like"/>
    <property type="match status" value="1"/>
</dbReference>
<dbReference type="PROSITE" id="PS00902">
    <property type="entry name" value="GLUTAMATE_5_KINASE"/>
    <property type="match status" value="1"/>
</dbReference>
<dbReference type="PROSITE" id="PS50890">
    <property type="entry name" value="PUA"/>
    <property type="match status" value="1"/>
</dbReference>
<accession>B7ILK2</accession>
<feature type="chain" id="PRO_1000125210" description="Glutamate 5-kinase">
    <location>
        <begin position="1"/>
        <end position="367"/>
    </location>
</feature>
<feature type="domain" description="PUA" evidence="1">
    <location>
        <begin position="276"/>
        <end position="350"/>
    </location>
</feature>
<feature type="binding site" evidence="1">
    <location>
        <position position="9"/>
    </location>
    <ligand>
        <name>ATP</name>
        <dbReference type="ChEBI" id="CHEBI:30616"/>
    </ligand>
</feature>
<feature type="binding site" evidence="1">
    <location>
        <position position="49"/>
    </location>
    <ligand>
        <name>substrate</name>
    </ligand>
</feature>
<feature type="binding site" evidence="1">
    <location>
        <position position="136"/>
    </location>
    <ligand>
        <name>substrate</name>
    </ligand>
</feature>
<feature type="binding site" evidence="1">
    <location>
        <position position="148"/>
    </location>
    <ligand>
        <name>substrate</name>
    </ligand>
</feature>
<feature type="binding site" evidence="1">
    <location>
        <begin position="168"/>
        <end position="169"/>
    </location>
    <ligand>
        <name>ATP</name>
        <dbReference type="ChEBI" id="CHEBI:30616"/>
    </ligand>
</feature>
<feature type="binding site" evidence="1">
    <location>
        <begin position="210"/>
        <end position="216"/>
    </location>
    <ligand>
        <name>ATP</name>
        <dbReference type="ChEBI" id="CHEBI:30616"/>
    </ligand>
</feature>
<proteinExistence type="inferred from homology"/>
<comment type="function">
    <text evidence="1">Catalyzes the transfer of a phosphate group to glutamate to form L-glutamate 5-phosphate.</text>
</comment>
<comment type="catalytic activity">
    <reaction evidence="1">
        <text>L-glutamate + ATP = L-glutamyl 5-phosphate + ADP</text>
        <dbReference type="Rhea" id="RHEA:14877"/>
        <dbReference type="ChEBI" id="CHEBI:29985"/>
        <dbReference type="ChEBI" id="CHEBI:30616"/>
        <dbReference type="ChEBI" id="CHEBI:58274"/>
        <dbReference type="ChEBI" id="CHEBI:456216"/>
        <dbReference type="EC" id="2.7.2.11"/>
    </reaction>
</comment>
<comment type="pathway">
    <text evidence="1">Amino-acid biosynthesis; L-proline biosynthesis; L-glutamate 5-semialdehyde from L-glutamate: step 1/2.</text>
</comment>
<comment type="subcellular location">
    <subcellularLocation>
        <location evidence="1">Cytoplasm</location>
    </subcellularLocation>
</comment>
<comment type="similarity">
    <text evidence="1">Belongs to the glutamate 5-kinase family.</text>
</comment>
<sequence length="367" mass="39373">MKKQRIVVKIGSSSLADSHGGISTEQLSDHVAALARLKEEGHEVVLITSGAVAAGFSALGYPSRPVTIKGKQAAAAVGQSLLMQAYTEEFRKYGIVTAQLLLTRSDFSRKEQYSNAYATLGELLNRSALPIINENDSISLEELTFGDNDMLSALVSGLVSADMLMIFTDVNGLYDKNPQKNADAKKYYFLPEVTEEISSLAGDAGSKLGTGGMKSKIDAAKTALSLGVSVFIGTGRGQEKFVDVLKGKGDGTYVGNAPQKEMKMNKQWIALHSLVSGQIEVDAGAATAIIQHGKSLLPAGVTNVSGFFQVGEVVEVVTQQGRVIGKGQCTYSAEELRDVKGMQSQDIQVRGERHSYEVIHRDHWVSL</sequence>
<organism>
    <name type="scientific">Bacillus cereus (strain G9842)</name>
    <dbReference type="NCBI Taxonomy" id="405531"/>
    <lineage>
        <taxon>Bacteria</taxon>
        <taxon>Bacillati</taxon>
        <taxon>Bacillota</taxon>
        <taxon>Bacilli</taxon>
        <taxon>Bacillales</taxon>
        <taxon>Bacillaceae</taxon>
        <taxon>Bacillus</taxon>
        <taxon>Bacillus cereus group</taxon>
    </lineage>
</organism>
<evidence type="ECO:0000255" key="1">
    <source>
        <dbReference type="HAMAP-Rule" id="MF_00456"/>
    </source>
</evidence>
<gene>
    <name evidence="1" type="primary">proB</name>
    <name type="ordered locus">BCG9842_B2251</name>
</gene>
<reference key="1">
    <citation type="submission" date="2008-10" db="EMBL/GenBank/DDBJ databases">
        <title>Genome sequence of Bacillus cereus G9842.</title>
        <authorList>
            <person name="Dodson R.J."/>
            <person name="Durkin A.S."/>
            <person name="Rosovitz M.J."/>
            <person name="Rasko D.A."/>
            <person name="Hoffmaster A."/>
            <person name="Ravel J."/>
            <person name="Sutton G."/>
        </authorList>
    </citation>
    <scope>NUCLEOTIDE SEQUENCE [LARGE SCALE GENOMIC DNA]</scope>
    <source>
        <strain>G9842</strain>
    </source>
</reference>
<keyword id="KW-0028">Amino-acid biosynthesis</keyword>
<keyword id="KW-0067">ATP-binding</keyword>
<keyword id="KW-0963">Cytoplasm</keyword>
<keyword id="KW-0418">Kinase</keyword>
<keyword id="KW-0547">Nucleotide-binding</keyword>
<keyword id="KW-0641">Proline biosynthesis</keyword>
<keyword id="KW-0808">Transferase</keyword>
<name>PROB_BACC2</name>
<protein>
    <recommendedName>
        <fullName evidence="1">Glutamate 5-kinase</fullName>
        <ecNumber evidence="1">2.7.2.11</ecNumber>
    </recommendedName>
    <alternativeName>
        <fullName evidence="1">Gamma-glutamyl kinase</fullName>
        <shortName evidence="1">GK</shortName>
    </alternativeName>
</protein>